<reference key="1">
    <citation type="journal article" date="2005" name="Nature">
        <title>Sequencing of Aspergillus nidulans and comparative analysis with A. fumigatus and A. oryzae.</title>
        <authorList>
            <person name="Galagan J.E."/>
            <person name="Calvo S.E."/>
            <person name="Cuomo C."/>
            <person name="Ma L.-J."/>
            <person name="Wortman J.R."/>
            <person name="Batzoglou S."/>
            <person name="Lee S.-I."/>
            <person name="Bastuerkmen M."/>
            <person name="Spevak C.C."/>
            <person name="Clutterbuck J."/>
            <person name="Kapitonov V."/>
            <person name="Jurka J."/>
            <person name="Scazzocchio C."/>
            <person name="Farman M.L."/>
            <person name="Butler J."/>
            <person name="Purcell S."/>
            <person name="Harris S."/>
            <person name="Braus G.H."/>
            <person name="Draht O."/>
            <person name="Busch S."/>
            <person name="D'Enfert C."/>
            <person name="Bouchier C."/>
            <person name="Goldman G.H."/>
            <person name="Bell-Pedersen D."/>
            <person name="Griffiths-Jones S."/>
            <person name="Doonan J.H."/>
            <person name="Yu J."/>
            <person name="Vienken K."/>
            <person name="Pain A."/>
            <person name="Freitag M."/>
            <person name="Selker E.U."/>
            <person name="Archer D.B."/>
            <person name="Penalva M.A."/>
            <person name="Oakley B.R."/>
            <person name="Momany M."/>
            <person name="Tanaka T."/>
            <person name="Kumagai T."/>
            <person name="Asai K."/>
            <person name="Machida M."/>
            <person name="Nierman W.C."/>
            <person name="Denning D.W."/>
            <person name="Caddick M.X."/>
            <person name="Hynes M."/>
            <person name="Paoletti M."/>
            <person name="Fischer R."/>
            <person name="Miller B.L."/>
            <person name="Dyer P.S."/>
            <person name="Sachs M.S."/>
            <person name="Osmani S.A."/>
            <person name="Birren B.W."/>
        </authorList>
    </citation>
    <scope>NUCLEOTIDE SEQUENCE [LARGE SCALE GENOMIC DNA]</scope>
    <source>
        <strain>FGSC A4 / ATCC 38163 / CBS 112.46 / NRRL 194 / M139</strain>
    </source>
</reference>
<reference key="2">
    <citation type="journal article" date="2009" name="Fungal Genet. Biol.">
        <title>The 2008 update of the Aspergillus nidulans genome annotation: a community effort.</title>
        <authorList>
            <person name="Wortman J.R."/>
            <person name="Gilsenan J.M."/>
            <person name="Joardar V."/>
            <person name="Deegan J."/>
            <person name="Clutterbuck J."/>
            <person name="Andersen M.R."/>
            <person name="Archer D."/>
            <person name="Bencina M."/>
            <person name="Braus G."/>
            <person name="Coutinho P."/>
            <person name="von Dohren H."/>
            <person name="Doonan J."/>
            <person name="Driessen A.J."/>
            <person name="Durek P."/>
            <person name="Espeso E."/>
            <person name="Fekete E."/>
            <person name="Flipphi M."/>
            <person name="Estrada C.G."/>
            <person name="Geysens S."/>
            <person name="Goldman G."/>
            <person name="de Groot P.W."/>
            <person name="Hansen K."/>
            <person name="Harris S.D."/>
            <person name="Heinekamp T."/>
            <person name="Helmstaedt K."/>
            <person name="Henrissat B."/>
            <person name="Hofmann G."/>
            <person name="Homan T."/>
            <person name="Horio T."/>
            <person name="Horiuchi H."/>
            <person name="James S."/>
            <person name="Jones M."/>
            <person name="Karaffa L."/>
            <person name="Karanyi Z."/>
            <person name="Kato M."/>
            <person name="Keller N."/>
            <person name="Kelly D.E."/>
            <person name="Kiel J.A."/>
            <person name="Kim J.M."/>
            <person name="van der Klei I.J."/>
            <person name="Klis F.M."/>
            <person name="Kovalchuk A."/>
            <person name="Krasevec N."/>
            <person name="Kubicek C.P."/>
            <person name="Liu B."/>
            <person name="Maccabe A."/>
            <person name="Meyer V."/>
            <person name="Mirabito P."/>
            <person name="Miskei M."/>
            <person name="Mos M."/>
            <person name="Mullins J."/>
            <person name="Nelson D.R."/>
            <person name="Nielsen J."/>
            <person name="Oakley B.R."/>
            <person name="Osmani S.A."/>
            <person name="Pakula T."/>
            <person name="Paszewski A."/>
            <person name="Paulsen I."/>
            <person name="Pilsyk S."/>
            <person name="Pocsi I."/>
            <person name="Punt P.J."/>
            <person name="Ram A.F."/>
            <person name="Ren Q."/>
            <person name="Robellet X."/>
            <person name="Robson G."/>
            <person name="Seiboth B."/>
            <person name="van Solingen P."/>
            <person name="Specht T."/>
            <person name="Sun J."/>
            <person name="Taheri-Talesh N."/>
            <person name="Takeshita N."/>
            <person name="Ussery D."/>
            <person name="vanKuyk P.A."/>
            <person name="Visser H."/>
            <person name="van de Vondervoort P.J."/>
            <person name="de Vries R.P."/>
            <person name="Walton J."/>
            <person name="Xiang X."/>
            <person name="Xiong Y."/>
            <person name="Zeng A.P."/>
            <person name="Brandt B.W."/>
            <person name="Cornell M.J."/>
            <person name="van den Hondel C.A."/>
            <person name="Visser J."/>
            <person name="Oliver S.G."/>
            <person name="Turner G."/>
        </authorList>
    </citation>
    <scope>GENOME REANNOTATION</scope>
    <source>
        <strain>FGSC A4 / ATCC 38163 / CBS 112.46 / NRRL 194 / M139</strain>
    </source>
</reference>
<sequence>MAGTQDPSSLEEILWRSPSHVQMMGGYLHSNNILFYFAESPFFDATSNNASLAIQANYNEAFRHFVETREAFEARLKTMQGLEFMVAYDPLQAAAGANAQFVHEPSNVWVIRKQTRRKRSGFEDEVVVLATFFVVGDCIYMAPSAASVIGNRILSAVTSLTSLLKTASTLPKFTPSHGHTYLPPAPKSTDVSHPSVQSQTSKENTPMPDADATNKSQSFTGSQNSSGPAVYDMRSLAESFSLVARYGDEFMDESPLMGEPGSFILSRPGDADRGAAPKQSQPSSTNAGGRVGTPLAKVDTPGKLSDKNSAAEEPKLRKKKSKPAS</sequence>
<protein>
    <recommendedName>
        <fullName>Mediator of RNA polymerase II transcription subunit 6</fullName>
    </recommendedName>
    <alternativeName>
        <fullName>Mediator complex subunit 6</fullName>
    </alternativeName>
</protein>
<name>MED6_EMENI</name>
<keyword id="KW-0010">Activator</keyword>
<keyword id="KW-0539">Nucleus</keyword>
<keyword id="KW-1185">Reference proteome</keyword>
<keyword id="KW-0804">Transcription</keyword>
<keyword id="KW-0805">Transcription regulation</keyword>
<dbReference type="EMBL" id="AACD01000109">
    <property type="protein sequence ID" value="EAA57889.1"/>
    <property type="status" value="ALT_SEQ"/>
    <property type="molecule type" value="Genomic_DNA"/>
</dbReference>
<dbReference type="EMBL" id="BN001301">
    <property type="protein sequence ID" value="CBF70966.1"/>
    <property type="status" value="ALT_SEQ"/>
    <property type="molecule type" value="Genomic_DNA"/>
</dbReference>
<dbReference type="RefSeq" id="XP_664153.1">
    <property type="nucleotide sequence ID" value="XM_659061.1"/>
</dbReference>
<dbReference type="SMR" id="Q5AYT1"/>
<dbReference type="FunCoup" id="Q5AYT1">
    <property type="interactions" value="777"/>
</dbReference>
<dbReference type="STRING" id="227321.Q5AYT1"/>
<dbReference type="KEGG" id="ani:ANIA_06549"/>
<dbReference type="eggNOG" id="KOG3169">
    <property type="taxonomic scope" value="Eukaryota"/>
</dbReference>
<dbReference type="HOGENOM" id="CLU_060172_2_0_1"/>
<dbReference type="InParanoid" id="Q5AYT1"/>
<dbReference type="OrthoDB" id="344220at2759"/>
<dbReference type="Proteomes" id="UP000000560">
    <property type="component" value="Chromosome I"/>
</dbReference>
<dbReference type="GO" id="GO:0070847">
    <property type="term" value="C:core mediator complex"/>
    <property type="evidence" value="ECO:0000318"/>
    <property type="project" value="GO_Central"/>
</dbReference>
<dbReference type="GO" id="GO:0016592">
    <property type="term" value="C:mediator complex"/>
    <property type="evidence" value="ECO:0000318"/>
    <property type="project" value="GO_Central"/>
</dbReference>
<dbReference type="GO" id="GO:0003713">
    <property type="term" value="F:transcription coactivator activity"/>
    <property type="evidence" value="ECO:0000318"/>
    <property type="project" value="GO_Central"/>
</dbReference>
<dbReference type="GO" id="GO:0006357">
    <property type="term" value="P:regulation of transcription by RNA polymerase II"/>
    <property type="evidence" value="ECO:0000318"/>
    <property type="project" value="GO_Central"/>
</dbReference>
<dbReference type="FunFam" id="3.10.450.580:FF:000003">
    <property type="entry name" value="Mediator of RNA polymerase II transcription subunit 6"/>
    <property type="match status" value="1"/>
</dbReference>
<dbReference type="Gene3D" id="3.10.450.580">
    <property type="entry name" value="Mediator complex, subunit Med6"/>
    <property type="match status" value="1"/>
</dbReference>
<dbReference type="InterPro" id="IPR007018">
    <property type="entry name" value="Mediator_Med6"/>
</dbReference>
<dbReference type="InterPro" id="IPR016612">
    <property type="entry name" value="Mediator_Med6_fun"/>
</dbReference>
<dbReference type="InterPro" id="IPR038566">
    <property type="entry name" value="Mediator_Med6_sf"/>
</dbReference>
<dbReference type="PANTHER" id="PTHR13104">
    <property type="entry name" value="MED-6-RELATED"/>
    <property type="match status" value="1"/>
</dbReference>
<dbReference type="Pfam" id="PF04934">
    <property type="entry name" value="Med6"/>
    <property type="match status" value="1"/>
</dbReference>
<dbReference type="PIRSF" id="PIRSF013286">
    <property type="entry name" value="MED6_fungi"/>
    <property type="match status" value="1"/>
</dbReference>
<evidence type="ECO:0000250" key="1"/>
<evidence type="ECO:0000256" key="2">
    <source>
        <dbReference type="SAM" id="MobiDB-lite"/>
    </source>
</evidence>
<evidence type="ECO:0000305" key="3"/>
<organism>
    <name type="scientific">Emericella nidulans (strain FGSC A4 / ATCC 38163 / CBS 112.46 / NRRL 194 / M139)</name>
    <name type="common">Aspergillus nidulans</name>
    <dbReference type="NCBI Taxonomy" id="227321"/>
    <lineage>
        <taxon>Eukaryota</taxon>
        <taxon>Fungi</taxon>
        <taxon>Dikarya</taxon>
        <taxon>Ascomycota</taxon>
        <taxon>Pezizomycotina</taxon>
        <taxon>Eurotiomycetes</taxon>
        <taxon>Eurotiomycetidae</taxon>
        <taxon>Eurotiales</taxon>
        <taxon>Aspergillaceae</taxon>
        <taxon>Aspergillus</taxon>
        <taxon>Aspergillus subgen. Nidulantes</taxon>
    </lineage>
</organism>
<accession>Q5AYT1</accession>
<accession>C8V0T2</accession>
<proteinExistence type="inferred from homology"/>
<gene>
    <name type="primary">med6</name>
    <name type="ORF">AN6549</name>
</gene>
<feature type="chain" id="PRO_0000303058" description="Mediator of RNA polymerase II transcription subunit 6">
    <location>
        <begin position="1"/>
        <end position="325"/>
    </location>
</feature>
<feature type="region of interest" description="Disordered" evidence="2">
    <location>
        <begin position="175"/>
        <end position="230"/>
    </location>
</feature>
<feature type="region of interest" description="Disordered" evidence="2">
    <location>
        <begin position="253"/>
        <end position="325"/>
    </location>
</feature>
<feature type="compositionally biased region" description="Polar residues" evidence="2">
    <location>
        <begin position="189"/>
        <end position="204"/>
    </location>
</feature>
<feature type="compositionally biased region" description="Polar residues" evidence="2">
    <location>
        <begin position="213"/>
        <end position="227"/>
    </location>
</feature>
<feature type="compositionally biased region" description="Polar residues" evidence="2">
    <location>
        <begin position="278"/>
        <end position="287"/>
    </location>
</feature>
<feature type="compositionally biased region" description="Basic and acidic residues" evidence="2">
    <location>
        <begin position="304"/>
        <end position="315"/>
    </location>
</feature>
<feature type="compositionally biased region" description="Basic residues" evidence="2">
    <location>
        <begin position="316"/>
        <end position="325"/>
    </location>
</feature>
<comment type="function">
    <text evidence="1">Component of the Mediator complex, a coactivator involved in the regulated transcription of nearly all RNA polymerase II-dependent genes. Mediator functions as a bridge to convey information from gene-specific regulatory proteins to the basal RNA polymerase II transcription machinery. Mediator is recruited to promoters by direct interactions with regulatory proteins and serves as a scaffold for the assembly of a functional preinitiation complex with RNA polymerase II and the general transcription factors (By similarity).</text>
</comment>
<comment type="subunit">
    <text evidence="1">Component of the Mediator complex.</text>
</comment>
<comment type="subcellular location">
    <subcellularLocation>
        <location evidence="1">Nucleus</location>
    </subcellularLocation>
</comment>
<comment type="similarity">
    <text evidence="3">Belongs to the Mediator complex subunit 6 family.</text>
</comment>
<comment type="sequence caution" evidence="3">
    <conflict type="erroneous gene model prediction">
        <sequence resource="EMBL-CDS" id="CBF70966"/>
    </conflict>
</comment>
<comment type="sequence caution" evidence="3">
    <conflict type="erroneous gene model prediction">
        <sequence resource="EMBL-CDS" id="EAA57889"/>
    </conflict>
</comment>